<keyword id="KW-0687">Ribonucleoprotein</keyword>
<keyword id="KW-0689">Ribosomal protein</keyword>
<keyword id="KW-0694">RNA-binding</keyword>
<keyword id="KW-0699">rRNA-binding</keyword>
<organism>
    <name type="scientific">Dehalococcoides mccartyi (strain ATCC BAA-2100 / JCM 16839 / KCTC 5957 / BAV1)</name>
    <dbReference type="NCBI Taxonomy" id="216389"/>
    <lineage>
        <taxon>Bacteria</taxon>
        <taxon>Bacillati</taxon>
        <taxon>Chloroflexota</taxon>
        <taxon>Dehalococcoidia</taxon>
        <taxon>Dehalococcoidales</taxon>
        <taxon>Dehalococcoidaceae</taxon>
        <taxon>Dehalococcoides</taxon>
    </lineage>
</organism>
<protein>
    <recommendedName>
        <fullName evidence="1">Large ribosomal subunit protein uL22</fullName>
    </recommendedName>
    <alternativeName>
        <fullName evidence="2">50S ribosomal protein L22</fullName>
    </alternativeName>
</protein>
<reference key="1">
    <citation type="submission" date="2007-05" db="EMBL/GenBank/DDBJ databases">
        <title>Complete sequence of Dehalococcoides sp. BAV1.</title>
        <authorList>
            <consortium name="US DOE Joint Genome Institute"/>
            <person name="Copeland A."/>
            <person name="Lucas S."/>
            <person name="Lapidus A."/>
            <person name="Barry K."/>
            <person name="Detter J.C."/>
            <person name="Glavina del Rio T."/>
            <person name="Hammon N."/>
            <person name="Israni S."/>
            <person name="Pitluck S."/>
            <person name="Lowry S."/>
            <person name="Clum A."/>
            <person name="Schmutz J."/>
            <person name="Larimer F."/>
            <person name="Land M."/>
            <person name="Hauser L."/>
            <person name="Kyrpides N."/>
            <person name="Kim E."/>
            <person name="Ritalahti K.M."/>
            <person name="Loeffler F."/>
            <person name="Richardson P."/>
        </authorList>
    </citation>
    <scope>NUCLEOTIDE SEQUENCE [LARGE SCALE GENOMIC DNA]</scope>
    <source>
        <strain>ATCC BAA-2100 / JCM 16839 / KCTC 5957 / BAV1</strain>
    </source>
</reference>
<feature type="chain" id="PRO_1000086552" description="Large ribosomal subunit protein uL22">
    <location>
        <begin position="1"/>
        <end position="109"/>
    </location>
</feature>
<evidence type="ECO:0000255" key="1">
    <source>
        <dbReference type="HAMAP-Rule" id="MF_01331"/>
    </source>
</evidence>
<evidence type="ECO:0000305" key="2"/>
<comment type="function">
    <text evidence="1">This protein binds specifically to 23S rRNA; its binding is stimulated by other ribosomal proteins, e.g. L4, L17, and L20. It is important during the early stages of 50S assembly. It makes multiple contacts with different domains of the 23S rRNA in the assembled 50S subunit and ribosome (By similarity).</text>
</comment>
<comment type="function">
    <text evidence="1">The globular domain of the protein is located near the polypeptide exit tunnel on the outside of the subunit, while an extended beta-hairpin is found that lines the wall of the exit tunnel in the center of the 70S ribosome.</text>
</comment>
<comment type="subunit">
    <text evidence="1">Part of the 50S ribosomal subunit.</text>
</comment>
<comment type="similarity">
    <text evidence="1">Belongs to the universal ribosomal protein uL22 family.</text>
</comment>
<name>RL22_DEHMB</name>
<accession>A5FRY0</accession>
<proteinExistence type="inferred from homology"/>
<gene>
    <name evidence="1" type="primary">rplV</name>
    <name type="ordered locus">DehaBAV1_0456</name>
</gene>
<dbReference type="EMBL" id="CP000688">
    <property type="protein sequence ID" value="ABQ17041.1"/>
    <property type="molecule type" value="Genomic_DNA"/>
</dbReference>
<dbReference type="SMR" id="A5FRY0"/>
<dbReference type="KEGG" id="deb:DehaBAV1_0456"/>
<dbReference type="PATRIC" id="fig|216389.18.peg.499"/>
<dbReference type="HOGENOM" id="CLU_083987_3_3_0"/>
<dbReference type="GO" id="GO:0022625">
    <property type="term" value="C:cytosolic large ribosomal subunit"/>
    <property type="evidence" value="ECO:0007669"/>
    <property type="project" value="TreeGrafter"/>
</dbReference>
<dbReference type="GO" id="GO:0019843">
    <property type="term" value="F:rRNA binding"/>
    <property type="evidence" value="ECO:0007669"/>
    <property type="project" value="UniProtKB-UniRule"/>
</dbReference>
<dbReference type="GO" id="GO:0003735">
    <property type="term" value="F:structural constituent of ribosome"/>
    <property type="evidence" value="ECO:0007669"/>
    <property type="project" value="InterPro"/>
</dbReference>
<dbReference type="GO" id="GO:0006412">
    <property type="term" value="P:translation"/>
    <property type="evidence" value="ECO:0007669"/>
    <property type="project" value="UniProtKB-UniRule"/>
</dbReference>
<dbReference type="CDD" id="cd00336">
    <property type="entry name" value="Ribosomal_L22"/>
    <property type="match status" value="1"/>
</dbReference>
<dbReference type="Gene3D" id="3.90.470.10">
    <property type="entry name" value="Ribosomal protein L22/L17"/>
    <property type="match status" value="1"/>
</dbReference>
<dbReference type="HAMAP" id="MF_01331_B">
    <property type="entry name" value="Ribosomal_uL22_B"/>
    <property type="match status" value="1"/>
</dbReference>
<dbReference type="InterPro" id="IPR001063">
    <property type="entry name" value="Ribosomal_uL22"/>
</dbReference>
<dbReference type="InterPro" id="IPR005727">
    <property type="entry name" value="Ribosomal_uL22_bac/chlpt-type"/>
</dbReference>
<dbReference type="InterPro" id="IPR047867">
    <property type="entry name" value="Ribosomal_uL22_bac/org-type"/>
</dbReference>
<dbReference type="InterPro" id="IPR036394">
    <property type="entry name" value="Ribosomal_uL22_sf"/>
</dbReference>
<dbReference type="NCBIfam" id="TIGR01044">
    <property type="entry name" value="rplV_bact"/>
    <property type="match status" value="1"/>
</dbReference>
<dbReference type="PANTHER" id="PTHR13501">
    <property type="entry name" value="CHLOROPLAST 50S RIBOSOMAL PROTEIN L22-RELATED"/>
    <property type="match status" value="1"/>
</dbReference>
<dbReference type="PANTHER" id="PTHR13501:SF8">
    <property type="entry name" value="LARGE RIBOSOMAL SUBUNIT PROTEIN UL22M"/>
    <property type="match status" value="1"/>
</dbReference>
<dbReference type="Pfam" id="PF00237">
    <property type="entry name" value="Ribosomal_L22"/>
    <property type="match status" value="1"/>
</dbReference>
<dbReference type="SUPFAM" id="SSF54843">
    <property type="entry name" value="Ribosomal protein L22"/>
    <property type="match status" value="1"/>
</dbReference>
<sequence>MEVKAIVKDTGYSALKVRLCVDLVRGKKVSEAITLLRFMTSPTAKVVSKVIKSAAANAENNFQMNPADLKISQIYADEARMLKRMRPQARGRVSPILKRSSHITVVVAD</sequence>